<name>FUCL6_ANGJA</name>
<accession>Q9I926</accession>
<keyword id="KW-0106">Calcium</keyword>
<keyword id="KW-1015">Disulfide bond</keyword>
<keyword id="KW-0430">Lectin</keyword>
<keyword id="KW-0479">Metal-binding</keyword>
<keyword id="KW-0964">Secreted</keyword>
<keyword id="KW-0732">Signal</keyword>
<sequence>MKTCNLTDRMKVKMIMLLFQILAISTLQSVSAYIPDRYIQENVAVRGKATQSDQLQGQWDAFSHASNAIDGNQDSYFYHGSCTHTSGGANPWWRVDLLQEYKITSVTITNRGDCCGERITGARIIIGKNNGLNNPECSTVGIMTAGETKTFRCSHPMIGRYVTVYLPKTEYLHLCEVEVNAMLPAN</sequence>
<dbReference type="EMBL" id="AB037872">
    <property type="protein sequence ID" value="BAB03528.1"/>
    <property type="molecule type" value="mRNA"/>
</dbReference>
<dbReference type="SMR" id="Q9I926"/>
<dbReference type="CAZy" id="CBM47">
    <property type="family name" value="Carbohydrate-Binding Module Family 47"/>
</dbReference>
<dbReference type="GO" id="GO:0005615">
    <property type="term" value="C:extracellular space"/>
    <property type="evidence" value="ECO:0000314"/>
    <property type="project" value="UniProtKB"/>
</dbReference>
<dbReference type="GO" id="GO:0005509">
    <property type="term" value="F:calcium ion binding"/>
    <property type="evidence" value="ECO:0000250"/>
    <property type="project" value="UniProtKB"/>
</dbReference>
<dbReference type="GO" id="GO:0030246">
    <property type="term" value="F:carbohydrate binding"/>
    <property type="evidence" value="ECO:0000314"/>
    <property type="project" value="UniProtKB"/>
</dbReference>
<dbReference type="GO" id="GO:0042806">
    <property type="term" value="F:fucose binding"/>
    <property type="evidence" value="ECO:0000314"/>
    <property type="project" value="UniProtKB"/>
</dbReference>
<dbReference type="GO" id="GO:0010185">
    <property type="term" value="P:regulation of cellular defense response"/>
    <property type="evidence" value="ECO:0000304"/>
    <property type="project" value="UniProtKB"/>
</dbReference>
<dbReference type="GO" id="GO:0001868">
    <property type="term" value="P:regulation of complement activation, lectin pathway"/>
    <property type="evidence" value="ECO:0000304"/>
    <property type="project" value="UniProtKB"/>
</dbReference>
<dbReference type="GO" id="GO:0045088">
    <property type="term" value="P:regulation of innate immune response"/>
    <property type="evidence" value="ECO:0000304"/>
    <property type="project" value="UniProtKB"/>
</dbReference>
<dbReference type="Gene3D" id="2.60.120.260">
    <property type="entry name" value="Galactose-binding domain-like"/>
    <property type="match status" value="1"/>
</dbReference>
<dbReference type="InterPro" id="IPR051941">
    <property type="entry name" value="BG_Antigen-Binding_Lectin"/>
</dbReference>
<dbReference type="InterPro" id="IPR006585">
    <property type="entry name" value="FTP1"/>
</dbReference>
<dbReference type="InterPro" id="IPR008979">
    <property type="entry name" value="Galactose-bd-like_sf"/>
</dbReference>
<dbReference type="PANTHER" id="PTHR45713">
    <property type="entry name" value="FTP DOMAIN-CONTAINING PROTEIN"/>
    <property type="match status" value="1"/>
</dbReference>
<dbReference type="PANTHER" id="PTHR45713:SF8">
    <property type="entry name" value="SI:CH211-215K15.4"/>
    <property type="match status" value="1"/>
</dbReference>
<dbReference type="Pfam" id="PF22633">
    <property type="entry name" value="F5_F8_type_C_2"/>
    <property type="match status" value="1"/>
</dbReference>
<dbReference type="SMART" id="SM00607">
    <property type="entry name" value="FTP"/>
    <property type="match status" value="1"/>
</dbReference>
<dbReference type="SUPFAM" id="SSF49785">
    <property type="entry name" value="Galactose-binding domain-like"/>
    <property type="match status" value="1"/>
</dbReference>
<comment type="function">
    <text evidence="4">Acts as a defensive agent. Recognizes blood group fucosylated oligosaccharides including A, B, H and Lewis B-type antigens. Does not recognize Lewis A antigen and has low affinity for monovalent haptens.</text>
</comment>
<comment type="subunit">
    <text evidence="2">Homotrimer.</text>
</comment>
<comment type="subcellular location">
    <subcellularLocation>
        <location evidence="4">Secreted</location>
    </subcellularLocation>
</comment>
<comment type="tissue specificity">
    <text evidence="4">Gill mucous cells.</text>
</comment>
<comment type="miscellaneous">
    <text evidence="1">Binds 1 calcium ion per monomer.</text>
</comment>
<comment type="similarity">
    <text evidence="5">Belongs to the fucolectin family.</text>
</comment>
<feature type="signal peptide" evidence="3">
    <location>
        <begin position="1"/>
        <end position="32"/>
    </location>
</feature>
<feature type="chain" id="PRO_0000223937" description="Fucolectin-6" evidence="5">
    <location>
        <begin position="33"/>
        <end position="186"/>
    </location>
</feature>
<feature type="region of interest" description="F5/8 type C-like">
    <location>
        <begin position="40"/>
        <end position="186"/>
    </location>
</feature>
<feature type="short sequence motif" description="Cell attachment site" evidence="3">
    <location>
        <begin position="111"/>
        <end position="113"/>
    </location>
</feature>
<feature type="binding site" evidence="1">
    <location>
        <position position="67"/>
    </location>
    <ligand>
        <name>Ca(2+)</name>
        <dbReference type="ChEBI" id="CHEBI:29108"/>
    </ligand>
</feature>
<feature type="binding site" evidence="2">
    <location>
        <position position="70"/>
    </location>
    <ligand>
        <name>Ca(2+)</name>
        <dbReference type="ChEBI" id="CHEBI:29108"/>
    </ligand>
</feature>
<feature type="binding site" evidence="1">
    <location>
        <position position="72"/>
    </location>
    <ligand>
        <name>Ca(2+)</name>
        <dbReference type="ChEBI" id="CHEBI:29108"/>
    </ligand>
</feature>
<feature type="binding site" evidence="2">
    <location>
        <position position="81"/>
    </location>
    <ligand>
        <name>Ca(2+)</name>
        <dbReference type="ChEBI" id="CHEBI:29108"/>
    </ligand>
</feature>
<feature type="binding site" evidence="2">
    <location>
        <position position="84"/>
    </location>
    <ligand>
        <name>alpha-L-fucose</name>
        <dbReference type="ChEBI" id="CHEBI:42548"/>
    </ligand>
</feature>
<feature type="binding site" evidence="2">
    <location>
        <position position="111"/>
    </location>
    <ligand>
        <name>alpha-L-fucose</name>
        <dbReference type="ChEBI" id="CHEBI:42548"/>
    </ligand>
</feature>
<feature type="binding site" evidence="2">
    <location>
        <position position="118"/>
    </location>
    <ligand>
        <name>alpha-L-fucose</name>
        <dbReference type="ChEBI" id="CHEBI:42548"/>
    </ligand>
</feature>
<feature type="binding site" evidence="1">
    <location>
        <position position="175"/>
    </location>
    <ligand>
        <name>Ca(2+)</name>
        <dbReference type="ChEBI" id="CHEBI:29108"/>
    </ligand>
</feature>
<feature type="binding site" evidence="2">
    <location>
        <position position="176"/>
    </location>
    <ligand>
        <name>Ca(2+)</name>
        <dbReference type="ChEBI" id="CHEBI:29108"/>
    </ligand>
</feature>
<feature type="disulfide bond" evidence="2">
    <location>
        <begin position="82"/>
        <end position="175"/>
    </location>
</feature>
<feature type="disulfide bond" evidence="2">
    <location>
        <begin position="114"/>
        <end position="115"/>
    </location>
</feature>
<feature type="disulfide bond" evidence="2">
    <location>
        <begin position="137"/>
        <end position="153"/>
    </location>
</feature>
<protein>
    <recommendedName>
        <fullName>Fucolectin-6</fullName>
    </recommendedName>
</protein>
<evidence type="ECO:0000250" key="1"/>
<evidence type="ECO:0000250" key="2">
    <source>
        <dbReference type="UniProtKB" id="Q7SIC1"/>
    </source>
</evidence>
<evidence type="ECO:0000255" key="3"/>
<evidence type="ECO:0000269" key="4">
    <source>
    </source>
</evidence>
<evidence type="ECO:0000305" key="5"/>
<evidence type="ECO:0000312" key="6">
    <source>
        <dbReference type="EMBL" id="BAB03528.1"/>
    </source>
</evidence>
<proteinExistence type="evidence at transcript level"/>
<organism>
    <name type="scientific">Anguilla japonica</name>
    <name type="common">Japanese eel</name>
    <dbReference type="NCBI Taxonomy" id="7937"/>
    <lineage>
        <taxon>Eukaryota</taxon>
        <taxon>Metazoa</taxon>
        <taxon>Chordata</taxon>
        <taxon>Craniata</taxon>
        <taxon>Vertebrata</taxon>
        <taxon>Euteleostomi</taxon>
        <taxon>Actinopterygii</taxon>
        <taxon>Neopterygii</taxon>
        <taxon>Teleostei</taxon>
        <taxon>Anguilliformes</taxon>
        <taxon>Anguillidae</taxon>
        <taxon>Anguilla</taxon>
    </lineage>
</organism>
<reference evidence="5 6" key="1">
    <citation type="journal article" date="2000" name="J. Biol. Chem.">
        <title>Multiplicity, structures, and endocrine and exocrine natures of eel fucose-binding lectins.</title>
        <authorList>
            <person name="Honda S."/>
            <person name="Kashiwagi M."/>
            <person name="Miyamoto K."/>
            <person name="Takei Y."/>
            <person name="Hirose S."/>
        </authorList>
    </citation>
    <scope>NUCLEOTIDE SEQUENCE [MRNA]</scope>
    <scope>FUNCTION</scope>
    <scope>SUBCELLULAR LOCATION</scope>
    <scope>TISSUE SPECIFICITY</scope>
    <source>
        <tissue evidence="6">Gill</tissue>
    </source>
</reference>